<reference key="1">
    <citation type="journal article" date="2005" name="Nucleic Acids Res.">
        <title>Genome dynamics and diversity of Shigella species, the etiologic agents of bacillary dysentery.</title>
        <authorList>
            <person name="Yang F."/>
            <person name="Yang J."/>
            <person name="Zhang X."/>
            <person name="Chen L."/>
            <person name="Jiang Y."/>
            <person name="Yan Y."/>
            <person name="Tang X."/>
            <person name="Wang J."/>
            <person name="Xiong Z."/>
            <person name="Dong J."/>
            <person name="Xue Y."/>
            <person name="Zhu Y."/>
            <person name="Xu X."/>
            <person name="Sun L."/>
            <person name="Chen S."/>
            <person name="Nie H."/>
            <person name="Peng J."/>
            <person name="Xu J."/>
            <person name="Wang Y."/>
            <person name="Yuan Z."/>
            <person name="Wen Y."/>
            <person name="Yao Z."/>
            <person name="Shen Y."/>
            <person name="Qiang B."/>
            <person name="Hou Y."/>
            <person name="Yu J."/>
            <person name="Jin Q."/>
        </authorList>
    </citation>
    <scope>NUCLEOTIDE SEQUENCE [LARGE SCALE GENOMIC DNA]</scope>
    <source>
        <strain>Ss046</strain>
    </source>
</reference>
<dbReference type="EMBL" id="CP000038">
    <property type="protein sequence ID" value="AAZ89993.1"/>
    <property type="molecule type" value="Genomic_DNA"/>
</dbReference>
<dbReference type="RefSeq" id="WP_000022439.1">
    <property type="nucleotide sequence ID" value="NC_007384.1"/>
</dbReference>
<dbReference type="SMR" id="Q3YWW9"/>
<dbReference type="GeneID" id="93778697"/>
<dbReference type="KEGG" id="ssn:SSON_3431"/>
<dbReference type="HOGENOM" id="CLU_095787_0_0_6"/>
<dbReference type="Proteomes" id="UP000002529">
    <property type="component" value="Chromosome"/>
</dbReference>
<dbReference type="GO" id="GO:0005886">
    <property type="term" value="C:plasma membrane"/>
    <property type="evidence" value="ECO:0007669"/>
    <property type="project" value="UniProtKB-SubCell"/>
</dbReference>
<dbReference type="GO" id="GO:0008381">
    <property type="term" value="F:mechanosensitive monoatomic ion channel activity"/>
    <property type="evidence" value="ECO:0007669"/>
    <property type="project" value="UniProtKB-UniRule"/>
</dbReference>
<dbReference type="FunFam" id="1.10.1200.120:FF:000001">
    <property type="entry name" value="Large-conductance mechanosensitive channel"/>
    <property type="match status" value="1"/>
</dbReference>
<dbReference type="Gene3D" id="1.10.1200.120">
    <property type="entry name" value="Large-conductance mechanosensitive channel, MscL, domain 1"/>
    <property type="match status" value="1"/>
</dbReference>
<dbReference type="HAMAP" id="MF_00115">
    <property type="entry name" value="MscL"/>
    <property type="match status" value="1"/>
</dbReference>
<dbReference type="InterPro" id="IPR019823">
    <property type="entry name" value="Mechanosensitive_channel_CS"/>
</dbReference>
<dbReference type="InterPro" id="IPR001185">
    <property type="entry name" value="MS_channel"/>
</dbReference>
<dbReference type="InterPro" id="IPR037673">
    <property type="entry name" value="MSC/AndL"/>
</dbReference>
<dbReference type="InterPro" id="IPR036019">
    <property type="entry name" value="MscL_channel"/>
</dbReference>
<dbReference type="NCBIfam" id="TIGR00220">
    <property type="entry name" value="mscL"/>
    <property type="match status" value="1"/>
</dbReference>
<dbReference type="NCBIfam" id="NF001841">
    <property type="entry name" value="PRK00567.1-1"/>
    <property type="match status" value="1"/>
</dbReference>
<dbReference type="NCBIfam" id="NF001843">
    <property type="entry name" value="PRK00567.1-4"/>
    <property type="match status" value="1"/>
</dbReference>
<dbReference type="PANTHER" id="PTHR30266:SF2">
    <property type="entry name" value="LARGE-CONDUCTANCE MECHANOSENSITIVE CHANNEL"/>
    <property type="match status" value="1"/>
</dbReference>
<dbReference type="PANTHER" id="PTHR30266">
    <property type="entry name" value="MECHANOSENSITIVE CHANNEL MSCL"/>
    <property type="match status" value="1"/>
</dbReference>
<dbReference type="Pfam" id="PF01741">
    <property type="entry name" value="MscL"/>
    <property type="match status" value="1"/>
</dbReference>
<dbReference type="PRINTS" id="PR01264">
    <property type="entry name" value="MECHCHANNEL"/>
</dbReference>
<dbReference type="SUPFAM" id="SSF81330">
    <property type="entry name" value="Gated mechanosensitive channel"/>
    <property type="match status" value="1"/>
</dbReference>
<dbReference type="PROSITE" id="PS01327">
    <property type="entry name" value="MSCL"/>
    <property type="match status" value="1"/>
</dbReference>
<feature type="chain" id="PRO_0000238035" description="Large-conductance mechanosensitive channel">
    <location>
        <begin position="1"/>
        <end position="136"/>
    </location>
</feature>
<feature type="transmembrane region" description="Helical" evidence="1">
    <location>
        <begin position="10"/>
        <end position="30"/>
    </location>
</feature>
<feature type="transmembrane region" description="Helical" evidence="1">
    <location>
        <begin position="76"/>
        <end position="96"/>
    </location>
</feature>
<gene>
    <name evidence="1" type="primary">mscL</name>
    <name type="ordered locus">SSON_3431</name>
</gene>
<proteinExistence type="inferred from homology"/>
<organism>
    <name type="scientific">Shigella sonnei (strain Ss046)</name>
    <dbReference type="NCBI Taxonomy" id="300269"/>
    <lineage>
        <taxon>Bacteria</taxon>
        <taxon>Pseudomonadati</taxon>
        <taxon>Pseudomonadota</taxon>
        <taxon>Gammaproteobacteria</taxon>
        <taxon>Enterobacterales</taxon>
        <taxon>Enterobacteriaceae</taxon>
        <taxon>Shigella</taxon>
    </lineage>
</organism>
<name>MSCL_SHISS</name>
<keyword id="KW-0997">Cell inner membrane</keyword>
<keyword id="KW-1003">Cell membrane</keyword>
<keyword id="KW-0407">Ion channel</keyword>
<keyword id="KW-0406">Ion transport</keyword>
<keyword id="KW-0472">Membrane</keyword>
<keyword id="KW-1185">Reference proteome</keyword>
<keyword id="KW-0812">Transmembrane</keyword>
<keyword id="KW-1133">Transmembrane helix</keyword>
<keyword id="KW-0813">Transport</keyword>
<sequence length="136" mass="14927">MSIIKEFREFAMRGNVVDLAVGVIIGAAFGKIVSSLVADIIMPPLGLLIGGIDFKQFAVTLRDAQGDIPAVVMHYGVFIQNVFDFLIVAFAIFMAIKLINKLNRKKEEPAAAPAPTKEEVLLAEIRDLLKEQNNRS</sequence>
<comment type="function">
    <text evidence="1">Channel that opens in response to stretch forces in the membrane lipid bilayer. May participate in the regulation of osmotic pressure changes within the cell.</text>
</comment>
<comment type="subunit">
    <text evidence="1">Homopentamer.</text>
</comment>
<comment type="subcellular location">
    <subcellularLocation>
        <location evidence="1">Cell inner membrane</location>
        <topology evidence="1">Multi-pass membrane protein</topology>
    </subcellularLocation>
</comment>
<comment type="similarity">
    <text evidence="1">Belongs to the MscL family.</text>
</comment>
<evidence type="ECO:0000255" key="1">
    <source>
        <dbReference type="HAMAP-Rule" id="MF_00115"/>
    </source>
</evidence>
<accession>Q3YWW9</accession>
<protein>
    <recommendedName>
        <fullName evidence="1">Large-conductance mechanosensitive channel</fullName>
    </recommendedName>
</protein>